<reference evidence="16" key="1">
    <citation type="journal article" date="2000" name="FEBS Lett.">
        <title>Conservation of components of the dystrophin complex in Drosophila.</title>
        <authorList>
            <person name="Greener M.J."/>
            <person name="Roberts R.G."/>
        </authorList>
    </citation>
    <scope>NUCLEOTIDE SEQUENCE [MRNA] (ISOFORM C)</scope>
    <scope>SUBUNIT</scope>
</reference>
<reference evidence="16" key="2">
    <citation type="journal article" date="2001" name="Gene">
        <title>The dystrophin / utrophin homologues in Drosophila and in sea urchin.</title>
        <authorList>
            <person name="Neuman S."/>
            <person name="Kaban A."/>
            <person name="Volk T."/>
            <person name="Yaffe D."/>
            <person name="Nudel U."/>
        </authorList>
    </citation>
    <scope>NUCLEOTIDE SEQUENCE [MRNA] (ISOFORMS A; F AND G)</scope>
    <scope>TISSUE SPECIFICITY</scope>
    <scope>DEVELOPMENTAL STAGE</scope>
    <source>
        <tissue>Embryo</tissue>
    </source>
</reference>
<reference evidence="16" key="3">
    <citation type="journal article" date="2000" name="Science">
        <title>The genome sequence of Drosophila melanogaster.</title>
        <authorList>
            <person name="Adams M.D."/>
            <person name="Celniker S.E."/>
            <person name="Holt R.A."/>
            <person name="Evans C.A."/>
            <person name="Gocayne J.D."/>
            <person name="Amanatides P.G."/>
            <person name="Scherer S.E."/>
            <person name="Li P.W."/>
            <person name="Hoskins R.A."/>
            <person name="Galle R.F."/>
            <person name="George R.A."/>
            <person name="Lewis S.E."/>
            <person name="Richards S."/>
            <person name="Ashburner M."/>
            <person name="Henderson S.N."/>
            <person name="Sutton G.G."/>
            <person name="Wortman J.R."/>
            <person name="Yandell M.D."/>
            <person name="Zhang Q."/>
            <person name="Chen L.X."/>
            <person name="Brandon R.C."/>
            <person name="Rogers Y.-H.C."/>
            <person name="Blazej R.G."/>
            <person name="Champe M."/>
            <person name="Pfeiffer B.D."/>
            <person name="Wan K.H."/>
            <person name="Doyle C."/>
            <person name="Baxter E.G."/>
            <person name="Helt G."/>
            <person name="Nelson C.R."/>
            <person name="Miklos G.L.G."/>
            <person name="Abril J.F."/>
            <person name="Agbayani A."/>
            <person name="An H.-J."/>
            <person name="Andrews-Pfannkoch C."/>
            <person name="Baldwin D."/>
            <person name="Ballew R.M."/>
            <person name="Basu A."/>
            <person name="Baxendale J."/>
            <person name="Bayraktaroglu L."/>
            <person name="Beasley E.M."/>
            <person name="Beeson K.Y."/>
            <person name="Benos P.V."/>
            <person name="Berman B.P."/>
            <person name="Bhandari D."/>
            <person name="Bolshakov S."/>
            <person name="Borkova D."/>
            <person name="Botchan M.R."/>
            <person name="Bouck J."/>
            <person name="Brokstein P."/>
            <person name="Brottier P."/>
            <person name="Burtis K.C."/>
            <person name="Busam D.A."/>
            <person name="Butler H."/>
            <person name="Cadieu E."/>
            <person name="Center A."/>
            <person name="Chandra I."/>
            <person name="Cherry J.M."/>
            <person name="Cawley S."/>
            <person name="Dahlke C."/>
            <person name="Davenport L.B."/>
            <person name="Davies P."/>
            <person name="de Pablos B."/>
            <person name="Delcher A."/>
            <person name="Deng Z."/>
            <person name="Mays A.D."/>
            <person name="Dew I."/>
            <person name="Dietz S.M."/>
            <person name="Dodson K."/>
            <person name="Doup L.E."/>
            <person name="Downes M."/>
            <person name="Dugan-Rocha S."/>
            <person name="Dunkov B.C."/>
            <person name="Dunn P."/>
            <person name="Durbin K.J."/>
            <person name="Evangelista C.C."/>
            <person name="Ferraz C."/>
            <person name="Ferriera S."/>
            <person name="Fleischmann W."/>
            <person name="Fosler C."/>
            <person name="Gabrielian A.E."/>
            <person name="Garg N.S."/>
            <person name="Gelbart W.M."/>
            <person name="Glasser K."/>
            <person name="Glodek A."/>
            <person name="Gong F."/>
            <person name="Gorrell J.H."/>
            <person name="Gu Z."/>
            <person name="Guan P."/>
            <person name="Harris M."/>
            <person name="Harris N.L."/>
            <person name="Harvey D.A."/>
            <person name="Heiman T.J."/>
            <person name="Hernandez J.R."/>
            <person name="Houck J."/>
            <person name="Hostin D."/>
            <person name="Houston K.A."/>
            <person name="Howland T.J."/>
            <person name="Wei M.-H."/>
            <person name="Ibegwam C."/>
            <person name="Jalali M."/>
            <person name="Kalush F."/>
            <person name="Karpen G.H."/>
            <person name="Ke Z."/>
            <person name="Kennison J.A."/>
            <person name="Ketchum K.A."/>
            <person name="Kimmel B.E."/>
            <person name="Kodira C.D."/>
            <person name="Kraft C.L."/>
            <person name="Kravitz S."/>
            <person name="Kulp D."/>
            <person name="Lai Z."/>
            <person name="Lasko P."/>
            <person name="Lei Y."/>
            <person name="Levitsky A.A."/>
            <person name="Li J.H."/>
            <person name="Li Z."/>
            <person name="Liang Y."/>
            <person name="Lin X."/>
            <person name="Liu X."/>
            <person name="Mattei B."/>
            <person name="McIntosh T.C."/>
            <person name="McLeod M.P."/>
            <person name="McPherson D."/>
            <person name="Merkulov G."/>
            <person name="Milshina N.V."/>
            <person name="Mobarry C."/>
            <person name="Morris J."/>
            <person name="Moshrefi A."/>
            <person name="Mount S.M."/>
            <person name="Moy M."/>
            <person name="Murphy B."/>
            <person name="Murphy L."/>
            <person name="Muzny D.M."/>
            <person name="Nelson D.L."/>
            <person name="Nelson D.R."/>
            <person name="Nelson K.A."/>
            <person name="Nixon K."/>
            <person name="Nusskern D.R."/>
            <person name="Pacleb J.M."/>
            <person name="Palazzolo M."/>
            <person name="Pittman G.S."/>
            <person name="Pan S."/>
            <person name="Pollard J."/>
            <person name="Puri V."/>
            <person name="Reese M.G."/>
            <person name="Reinert K."/>
            <person name="Remington K."/>
            <person name="Saunders R.D.C."/>
            <person name="Scheeler F."/>
            <person name="Shen H."/>
            <person name="Shue B.C."/>
            <person name="Siden-Kiamos I."/>
            <person name="Simpson M."/>
            <person name="Skupski M.P."/>
            <person name="Smith T.J."/>
            <person name="Spier E."/>
            <person name="Spradling A.C."/>
            <person name="Stapleton M."/>
            <person name="Strong R."/>
            <person name="Sun E."/>
            <person name="Svirskas R."/>
            <person name="Tector C."/>
            <person name="Turner R."/>
            <person name="Venter E."/>
            <person name="Wang A.H."/>
            <person name="Wang X."/>
            <person name="Wang Z.-Y."/>
            <person name="Wassarman D.A."/>
            <person name="Weinstock G.M."/>
            <person name="Weissenbach J."/>
            <person name="Williams S.M."/>
            <person name="Woodage T."/>
            <person name="Worley K.C."/>
            <person name="Wu D."/>
            <person name="Yang S."/>
            <person name="Yao Q.A."/>
            <person name="Ye J."/>
            <person name="Yeh R.-F."/>
            <person name="Zaveri J.S."/>
            <person name="Zhan M."/>
            <person name="Zhang G."/>
            <person name="Zhao Q."/>
            <person name="Zheng L."/>
            <person name="Zheng X.H."/>
            <person name="Zhong F.N."/>
            <person name="Zhong W."/>
            <person name="Zhou X."/>
            <person name="Zhu S.C."/>
            <person name="Zhu X."/>
            <person name="Smith H.O."/>
            <person name="Gibbs R.A."/>
            <person name="Myers E.W."/>
            <person name="Rubin G.M."/>
            <person name="Venter J.C."/>
        </authorList>
    </citation>
    <scope>NUCLEOTIDE SEQUENCE [LARGE SCALE GENOMIC DNA]</scope>
    <source>
        <strain evidence="5">Berkeley</strain>
    </source>
</reference>
<reference evidence="16" key="4">
    <citation type="journal article" date="2002" name="Genome Biol.">
        <title>Annotation of the Drosophila melanogaster euchromatic genome: a systematic review.</title>
        <authorList>
            <person name="Misra S."/>
            <person name="Crosby M.A."/>
            <person name="Mungall C.J."/>
            <person name="Matthews B.B."/>
            <person name="Campbell K.S."/>
            <person name="Hradecky P."/>
            <person name="Huang Y."/>
            <person name="Kaminker J.S."/>
            <person name="Millburn G.H."/>
            <person name="Prochnik S.E."/>
            <person name="Smith C.D."/>
            <person name="Tupy J.L."/>
            <person name="Whitfield E.J."/>
            <person name="Bayraktaroglu L."/>
            <person name="Berman B.P."/>
            <person name="Bettencourt B.R."/>
            <person name="Celniker S.E."/>
            <person name="de Grey A.D.N.J."/>
            <person name="Drysdale R.A."/>
            <person name="Harris N.L."/>
            <person name="Richter J."/>
            <person name="Russo S."/>
            <person name="Schroeder A.J."/>
            <person name="Shu S.Q."/>
            <person name="Stapleton M."/>
            <person name="Yamada C."/>
            <person name="Ashburner M."/>
            <person name="Gelbart W.M."/>
            <person name="Rubin G.M."/>
            <person name="Lewis S.E."/>
        </authorList>
    </citation>
    <scope>GENOME REANNOTATION</scope>
    <scope>ALTERNATIVE SPLICING</scope>
    <source>
        <strain>Berkeley</strain>
    </source>
</reference>
<reference key="5">
    <citation type="journal article" date="2006" name="J. Neurosci.">
        <title>Dystrophin is required for appropriate retrograde control of neurotransmitter release at the Drosophila neuromuscular junction.</title>
        <authorList>
            <person name="van der Plas M.C."/>
            <person name="Pilgram G.S.K."/>
            <person name="Plomp J.J."/>
            <person name="de Jong A."/>
            <person name="Fradkin L.G."/>
            <person name="Noordermeer J.N."/>
        </authorList>
    </citation>
    <scope>FUNCTION</scope>
    <scope>SUBCELLULAR LOCATION</scope>
    <scope>TISSUE SPECIFICITY</scope>
    <scope>DEVELOPMENTAL STAGE</scope>
</reference>
<reference key="6">
    <citation type="journal article" date="2007" name="J. Biol. Chem.">
        <title>A putative Src homology 3 domain binding motif but not the C-terminal dystrophin WW domain binding motif is required for dystroglycan function in cellular polarity in Drosophila.</title>
        <authorList>
            <person name="Yatsenko A.S."/>
            <person name="Gray E.E."/>
            <person name="Shcherbata H.R."/>
            <person name="Patterson L.B."/>
            <person name="Sood V.D."/>
            <person name="Kucherenko M.M."/>
            <person name="Baker D."/>
            <person name="Ruohola-Baker H."/>
        </authorList>
    </citation>
    <scope>INTERACTION WITH DG</scope>
</reference>
<reference key="7">
    <citation type="journal article" date="2007" name="Mech. Dev.">
        <title>Drosophila Dystrophin is required for integrity of the musculature.</title>
        <authorList>
            <person name="van der Plas M.C."/>
            <person name="Pilgram G.S.K."/>
            <person name="de Jong A.W.M."/>
            <person name="Bansraj M.R.K.S."/>
            <person name="Fradkin L.G."/>
            <person name="Noordermeer J.N."/>
        </authorList>
    </citation>
    <scope>FUNCTION</scope>
    <scope>DISRUPTION PHENOTYPE</scope>
</reference>
<reference key="8">
    <citation type="journal article" date="2008" name="Dev. Biol.">
        <title>The detached locus encodes Drosophila Dystrophin, which acts with other components of the Dystrophin Associated Protein Complex to influence intercellular signalling in developing wing veins.</title>
        <authorList>
            <person name="Christoforou C.P."/>
            <person name="Greer C.E."/>
            <person name="Challoner B.R."/>
            <person name="Charizanos D."/>
            <person name="Ray R.P."/>
        </authorList>
    </citation>
    <scope>FUNCTION</scope>
    <scope>DISRUPTION PHENOTYPE</scope>
</reference>
<reference key="9">
    <citation type="journal article" date="2008" name="J. Proteome Res.">
        <title>Phosphoproteome analysis of Drosophila melanogaster embryos.</title>
        <authorList>
            <person name="Zhai B."/>
            <person name="Villen J."/>
            <person name="Beausoleil S.A."/>
            <person name="Mintseris J."/>
            <person name="Gygi S.P."/>
        </authorList>
    </citation>
    <scope>PHOSPHORYLATION [LARGE SCALE ANALYSIS] AT SER-1832; SER-1838 AND SER-3207</scope>
    <scope>IDENTIFICATION BY MASS SPECTROMETRY</scope>
    <source>
        <tissue>Embryo</tissue>
    </source>
</reference>
<gene>
    <name type="primary">Dys</name>
    <name type="synonym">det</name>
    <name type="ORF">CG34157</name>
</gene>
<feature type="chain" id="PRO_0000076080" description="Dystrophin, isoforms A/C/F/G/H">
    <location>
        <begin position="1"/>
        <end position="3598"/>
    </location>
</feature>
<feature type="domain" description="Calponin-homology (CH) 1" evidence="1 16">
    <location>
        <begin position="12"/>
        <end position="116"/>
    </location>
</feature>
<feature type="domain" description="Calponin-homology (CH) 2" evidence="1 16">
    <location>
        <begin position="127"/>
        <end position="230"/>
    </location>
</feature>
<feature type="repeat" description="Spectrin 1">
    <location>
        <begin position="307"/>
        <end position="420"/>
    </location>
</feature>
<feature type="repeat" description="Spectrin 2">
    <location>
        <begin position="423"/>
        <end position="525"/>
    </location>
</feature>
<feature type="repeat" description="Spectrin 3">
    <location>
        <begin position="851"/>
        <end position="963"/>
    </location>
</feature>
<feature type="repeat" description="Spectrin 4">
    <location>
        <begin position="1056"/>
        <end position="1170"/>
    </location>
</feature>
<feature type="repeat" description="Spectrin 5">
    <location>
        <begin position="1173"/>
        <end position="1275"/>
    </location>
</feature>
<feature type="repeat" description="Spectrin 6">
    <location>
        <begin position="1381"/>
        <end position="1483"/>
    </location>
</feature>
<feature type="repeat" description="Spectrin 7">
    <location>
        <begin position="2237"/>
        <end position="2363"/>
    </location>
</feature>
<feature type="repeat" description="Spectrin 8">
    <location>
        <begin position="2366"/>
        <end position="2472"/>
    </location>
</feature>
<feature type="repeat" description="Spectrin 9">
    <location>
        <begin position="2475"/>
        <end position="2576"/>
    </location>
</feature>
<feature type="repeat" description="Spectrin 10">
    <location>
        <begin position="2579"/>
        <end position="2712"/>
    </location>
</feature>
<feature type="repeat" description="Spectrin 11">
    <location>
        <begin position="2715"/>
        <end position="2819"/>
    </location>
</feature>
<feature type="domain" description="WW" evidence="2 16">
    <location>
        <begin position="2849"/>
        <end position="2882"/>
    </location>
</feature>
<feature type="zinc finger region" description="ZZ-type" evidence="3">
    <location>
        <begin position="3107"/>
        <end position="3163"/>
    </location>
</feature>
<feature type="region of interest" description="Actin-binding">
    <location>
        <begin position="1"/>
        <end position="230"/>
    </location>
</feature>
<feature type="region of interest" description="Disordered" evidence="4">
    <location>
        <begin position="233"/>
        <end position="297"/>
    </location>
</feature>
<feature type="region of interest" description="Disordered" evidence="4">
    <location>
        <begin position="1633"/>
        <end position="1696"/>
    </location>
</feature>
<feature type="region of interest" description="Disordered" evidence="4">
    <location>
        <begin position="1716"/>
        <end position="1742"/>
    </location>
</feature>
<feature type="region of interest" description="Disordered" evidence="4">
    <location>
        <begin position="1799"/>
        <end position="1854"/>
    </location>
</feature>
<feature type="region of interest" description="Disordered" evidence="4">
    <location>
        <begin position="1878"/>
        <end position="1941"/>
    </location>
</feature>
<feature type="region of interest" description="Disordered" evidence="4">
    <location>
        <begin position="2204"/>
        <end position="2233"/>
    </location>
</feature>
<feature type="region of interest" description="Disordered" evidence="4">
    <location>
        <begin position="2655"/>
        <end position="2679"/>
    </location>
</feature>
<feature type="region of interest" description="Disordered" evidence="4">
    <location>
        <begin position="2822"/>
        <end position="2852"/>
    </location>
</feature>
<feature type="region of interest" description="Disordered" evidence="4">
    <location>
        <begin position="3316"/>
        <end position="3344"/>
    </location>
</feature>
<feature type="region of interest" description="Disordered" evidence="4">
    <location>
        <begin position="3387"/>
        <end position="3449"/>
    </location>
</feature>
<feature type="region of interest" description="Disordered" evidence="4">
    <location>
        <begin position="3483"/>
        <end position="3545"/>
    </location>
</feature>
<feature type="region of interest" description="Disordered" evidence="4">
    <location>
        <begin position="3560"/>
        <end position="3598"/>
    </location>
</feature>
<feature type="compositionally biased region" description="Polar residues" evidence="4">
    <location>
        <begin position="267"/>
        <end position="286"/>
    </location>
</feature>
<feature type="compositionally biased region" description="Low complexity" evidence="4">
    <location>
        <begin position="1663"/>
        <end position="1679"/>
    </location>
</feature>
<feature type="compositionally biased region" description="Basic and acidic residues" evidence="4">
    <location>
        <begin position="1803"/>
        <end position="1816"/>
    </location>
</feature>
<feature type="compositionally biased region" description="Acidic residues" evidence="4">
    <location>
        <begin position="1834"/>
        <end position="1843"/>
    </location>
</feature>
<feature type="compositionally biased region" description="Basic and acidic residues" evidence="4">
    <location>
        <begin position="1878"/>
        <end position="1893"/>
    </location>
</feature>
<feature type="compositionally biased region" description="Polar residues" evidence="4">
    <location>
        <begin position="2218"/>
        <end position="2233"/>
    </location>
</feature>
<feature type="compositionally biased region" description="Polar residues" evidence="4">
    <location>
        <begin position="3325"/>
        <end position="3337"/>
    </location>
</feature>
<feature type="compositionally biased region" description="Polar residues" evidence="4">
    <location>
        <begin position="3408"/>
        <end position="3439"/>
    </location>
</feature>
<feature type="compositionally biased region" description="Low complexity" evidence="4">
    <location>
        <begin position="3485"/>
        <end position="3499"/>
    </location>
</feature>
<feature type="compositionally biased region" description="Gly residues" evidence="4">
    <location>
        <begin position="3505"/>
        <end position="3523"/>
    </location>
</feature>
<feature type="compositionally biased region" description="Low complexity" evidence="4">
    <location>
        <begin position="3534"/>
        <end position="3545"/>
    </location>
</feature>
<feature type="compositionally biased region" description="Acidic residues" evidence="4">
    <location>
        <begin position="3560"/>
        <end position="3570"/>
    </location>
</feature>
<feature type="compositionally biased region" description="Low complexity" evidence="4">
    <location>
        <begin position="3571"/>
        <end position="3589"/>
    </location>
</feature>
<feature type="binding site" evidence="3">
    <location>
        <position position="3112"/>
    </location>
    <ligand>
        <name>Zn(2+)</name>
        <dbReference type="ChEBI" id="CHEBI:29105"/>
        <label>1</label>
    </ligand>
</feature>
<feature type="binding site" evidence="3">
    <location>
        <position position="3115"/>
    </location>
    <ligand>
        <name>Zn(2+)</name>
        <dbReference type="ChEBI" id="CHEBI:29105"/>
        <label>1</label>
    </ligand>
</feature>
<feature type="binding site" evidence="3">
    <location>
        <position position="3127"/>
    </location>
    <ligand>
        <name>Zn(2+)</name>
        <dbReference type="ChEBI" id="CHEBI:29105"/>
        <label>2</label>
    </ligand>
</feature>
<feature type="binding site" evidence="3">
    <location>
        <position position="3130"/>
    </location>
    <ligand>
        <name>Zn(2+)</name>
        <dbReference type="ChEBI" id="CHEBI:29105"/>
        <label>2</label>
    </ligand>
</feature>
<feature type="binding site" evidence="3">
    <location>
        <position position="3136"/>
    </location>
    <ligand>
        <name>Zn(2+)</name>
        <dbReference type="ChEBI" id="CHEBI:29105"/>
        <label>1</label>
    </ligand>
</feature>
<feature type="binding site" evidence="3">
    <location>
        <position position="3139"/>
    </location>
    <ligand>
        <name>Zn(2+)</name>
        <dbReference type="ChEBI" id="CHEBI:29105"/>
        <label>1</label>
    </ligand>
</feature>
<feature type="binding site" evidence="3">
    <location>
        <position position="3149"/>
    </location>
    <ligand>
        <name>Zn(2+)</name>
        <dbReference type="ChEBI" id="CHEBI:29105"/>
        <label>2</label>
    </ligand>
</feature>
<feature type="binding site" evidence="3">
    <location>
        <position position="3153"/>
    </location>
    <ligand>
        <name>Zn(2+)</name>
        <dbReference type="ChEBI" id="CHEBI:29105"/>
        <label>2</label>
    </ligand>
</feature>
<feature type="modified residue" description="Phosphoserine" evidence="12">
    <location>
        <position position="1832"/>
    </location>
</feature>
<feature type="modified residue" description="Phosphoserine" evidence="12">
    <location>
        <position position="1838"/>
    </location>
</feature>
<feature type="modified residue" description="Phosphoserine" evidence="12">
    <location>
        <position position="3207"/>
    </location>
</feature>
<feature type="splice variant" id="VSP_050729" description="In isoform F." evidence="15">
    <original>MEPGILI</original>
    <variation>MHDPSDYDSVYSEEDFVDTVRGAATPPLMDYEEFRVKTM</variation>
    <location>
        <begin position="1"/>
        <end position="7"/>
    </location>
</feature>
<feature type="splice variant" id="VSP_050730" description="In isoform G." evidence="15">
    <original>MEPGILI</original>
    <variation>MAYNLALKPADLAR</variation>
    <location>
        <begin position="1"/>
        <end position="7"/>
    </location>
</feature>
<feature type="splice variant" id="VSP_050731" description="In isoform C." evidence="14">
    <location>
        <begin position="1619"/>
        <end position="1965"/>
    </location>
</feature>
<feature type="splice variant" id="VSP_050732" description="In isoform C." evidence="14">
    <location>
        <begin position="2316"/>
        <end position="2338"/>
    </location>
</feature>
<feature type="splice variant" id="VSP_036500" description="In isoform A." evidence="15">
    <location>
        <begin position="3447"/>
        <end position="3547"/>
    </location>
</feature>
<feature type="sequence conflict" description="In Ref. 2; AAK15256." evidence="16" ref="2">
    <original>V</original>
    <variation>A</variation>
    <location>
        <position position="2615"/>
    </location>
</feature>
<feature type="sequence conflict" description="In Ref. 2; AAK15256." evidence="16" ref="2">
    <original>T</original>
    <variation>R</variation>
    <location>
        <position position="2682"/>
    </location>
</feature>
<feature type="sequence conflict" description="In Ref. 2; AAK15256." evidence="16" ref="2">
    <original>I</original>
    <variation>L</variation>
    <location>
        <position position="2700"/>
    </location>
</feature>
<feature type="sequence conflict" description="In Ref. 2; AAK15256." evidence="16" ref="2">
    <original>E</original>
    <variation>Q</variation>
    <location>
        <position position="2873"/>
    </location>
</feature>
<keyword id="KW-0009">Actin-binding</keyword>
<keyword id="KW-0025">Alternative splicing</keyword>
<keyword id="KW-0106">Calcium</keyword>
<keyword id="KW-1003">Cell membrane</keyword>
<keyword id="KW-0963">Cytoplasm</keyword>
<keyword id="KW-0206">Cytoskeleton</keyword>
<keyword id="KW-0472">Membrane</keyword>
<keyword id="KW-0479">Metal-binding</keyword>
<keyword id="KW-0597">Phosphoprotein</keyword>
<keyword id="KW-1185">Reference proteome</keyword>
<keyword id="KW-0677">Repeat</keyword>
<keyword id="KW-0862">Zinc</keyword>
<keyword id="KW-0863">Zinc-finger</keyword>
<evidence type="ECO:0000255" key="1">
    <source>
        <dbReference type="PROSITE-ProRule" id="PRU00044"/>
    </source>
</evidence>
<evidence type="ECO:0000255" key="2">
    <source>
        <dbReference type="PROSITE-ProRule" id="PRU00224"/>
    </source>
</evidence>
<evidence type="ECO:0000255" key="3">
    <source>
        <dbReference type="PROSITE-ProRule" id="PRU00228"/>
    </source>
</evidence>
<evidence type="ECO:0000256" key="4">
    <source>
        <dbReference type="SAM" id="MobiDB-lite"/>
    </source>
</evidence>
<evidence type="ECO:0000269" key="5">
    <source>
    </source>
</evidence>
<evidence type="ECO:0000269" key="6">
    <source>
    </source>
</evidence>
<evidence type="ECO:0000269" key="7">
    <source>
    </source>
</evidence>
<evidence type="ECO:0000269" key="8">
    <source>
    </source>
</evidence>
<evidence type="ECO:0000269" key="9">
    <source>
    </source>
</evidence>
<evidence type="ECO:0000269" key="10">
    <source>
    </source>
</evidence>
<evidence type="ECO:0000269" key="11">
    <source>
    </source>
</evidence>
<evidence type="ECO:0000269" key="12">
    <source>
    </source>
</evidence>
<evidence type="ECO:0000303" key="13">
    <source>
    </source>
</evidence>
<evidence type="ECO:0000303" key="14">
    <source>
    </source>
</evidence>
<evidence type="ECO:0000303" key="15">
    <source>
    </source>
</evidence>
<evidence type="ECO:0000305" key="16"/>
<evidence type="ECO:0000312" key="17">
    <source>
        <dbReference type="EMBL" id="AAF55673.2"/>
    </source>
</evidence>
<protein>
    <recommendedName>
        <fullName>Dystrophin, isoforms A/C/F/G/H</fullName>
        <shortName>DmDYS</shortName>
    </recommendedName>
    <alternativeName>
        <fullName>Protein detached</fullName>
    </alternativeName>
</protein>
<sequence>MEPGILIDERQHIQKKTFTKWINSHLIDTQCTPVKDLFLDLRDGHRLLALLSTLTQTNLKPEKGRMRVHHINNLNKVITEIQQHGVKLVNISSDDIVGGNAKLTLGLIWLIALEFNGQHLVKSHSSNGVEKSLLAWARQYTEPHGLQLNDFSSSWSDGRAFLMILDAHVEELNLQAALQQHALKRLHLAFDLAHRHFKIEKLLDAEDVHTHKPDNKSIQMYVMCLYHAMESMRTRQQEQEQDEGQDQDPGRVPCTSITDLDEVPLDNDQTSLGLYTSDSAGSMEQRSSGELKTHSMRPLSTATNASVEISGYQSALEAVLTLLLEDEQLLSQNLPDPQDFQTAKLQFHENESFMLKLTEHQEYVGEALEEGSNLINESQKAGAGLSQEDQNEVRQQMVLLNERWETLRLRALDVQAKILMRLAEFQKQKLEQLRQFLTSVEDRISHMSDIGPTLEEAEKQLLEAQKLKADLSEQQELVDSLSSMVVIVNDTSGNFNDLEDRLSALGERWSHVVKWSDLRKEKLQQYKCISRWLDAREQDLKLMESRDVTDVGGITQRINELNYCAKDLLELQRYLIDLRQMVAATLQDGDDKGERVLIQLESYEDRLDALKQIVEVQTVRIETKGFNFGRDRASYDDSRVVRPEGWVDYQMIIRFGEDDSQEDDDEHDLASKKRKLRNADNFNALENHIMEHFGYVQEVEQKLQQLQRQSLRQQCELLKELQAENSRRCGTLPELKKLYEVCELEDPSRNLLLEETHIKQLEQRYANLSQKLSSQQSESHTLLAKEKYYNSLTGFKLVLADSRDWYKQHAGSASGNELEQRLSHMESLASEISEAKTATEELDDNLIEWKQDFGLFYDSWHDMKQALQALIQQRGGESLSRQLKQIQDFVTKVSNQKVRVSNLEVMQEQQHFLNQLLDEMESLRLTYDNIPKHLIGEELQTAWNRLPEQLNERVIKQTTAIENLNHFAAEYNAIIAMLRSAADSKLNGSDGASSQDLRKLEIDVISARNFSEILIKEAEPAQKESLQSQIRALNTLYDQVEQVHREKKEQQTVLQSHIDLIQLRLKETDQWLTDLESNTPKSGISDIVNSNELFQSKSRFQTLKETCERETTQFRDLNERGGELLLQMDELQDQDRESRYGSLAKQFTRINARWTEVTELVYAKTALLEHISTQLGEFKKFMVSETGYLDKLENKIRNTPENAADAEEIMEELDDLENVLRSHSEEWLDKIQEIGNELIDNEFMADSIRRDIDETVQRWTQLQQQAKKRTELLEQKVSEAEQSEKCIVQFEKWLTRVDDILSDHLDNDVTIVDQPEEFQRLAHEFVANEKNFKEISELIDEHTRNGKVGAANRLQEQLNLMEVRFKYCQAKLSKCTAIQHSYESRLNRAYTDLRNVERSTEVVDVASAGPNTVQTQYQKCLQIYRTLSEIKSEIESTIKTGRRVCEDRYTKSPKQLSQRIDALKHLYNTLGENVTQSKATLERLLTLARQLEECFDSADNLIRRFESPQEVHDRNSILLEFEDVLRRCEDHYNEYNKSCDQSCMVETRQRIDGLKATYHKLTSADIIKRLTEMKTTLQNLDNISLETLRAMEHDLKEINVPSNPEIEKLQQQVIAIVVDVLKTRFNEATTLAARNTSSPDNDDTEIVVVSDTVRQRRARTPQSGESPSSAHTSSSESPTKGVENSPGAVGDQVMPDLLPPQTFRLAESSTLFSQISLNPQKVTNTPPPKPAKTKRKAPSSPAQVVEIRVKNIQNDKMSVQNIDLEPQQGEIVDTVNILESVEPFVPEYVETVQIVDLSEDSDSSVRVDSQGKEMRRSKSKHSLNETPLPKVSDNDEDSAEQEEDLLRPSAENTSTPFLRVEKRRISFDEKRKRVANERDILRDSEEEEPKTPDTPRAAQVSKPKRWRQLQPEMDALEPESPGRDSFYSPDKESGFDAEPLVFSDDEDIPRFSLEMTSTIDSDSDTSRIMTPSTKNPNPFLSKVLESLSSPVDDSNVTLKSPISEEQPQNLDDRVREFDKQAKQMIYKLKLTKAKIEQCHESEAEDLRLLIAPDAATLISQGDSLVLETHGRQGSISRLVMRTQIILREQFREVQQARSKTSGSGAPAPPLDSVNIEELVTKGLRRINVLIEKTVDLKSSTDLEKRMEDINERHDDLQVIVSAIGKNAQMPKVTPLMMNEIEKTKNNLIAHADSIELSLTELRNGPRISNGKERPDASSAATMSCRSEYNNEPSGTGALAGSFDKSVLQISDWLTWEQNMIKIQSVLVDDGDAVRLAIEKQEKVLRELKMKKPQLNELVHTAEVLKGDVKRQQLQEKELKQFSLAPHCSADLDYMRCCLKVTRLREHWDETSQCVLQRAAQLKNMLSDSQRFEAKRLELEKWLARMEQRAERMGTIATTADILEAQQKEQKSFHAELHQNKQHFDIFNELTQKLIAVYPNDDTTRIKKMTEVINQRYANLNSGVINRGKQLHAAVHSLQSFDRAMDQFLAFLSETETLCENAESDIERNPLMFKDLQSEIETHRVVYDRLDGTGRKLLGSLTSQEDAVMLQRRLDEMNQRWNNLKSKSIAIRNRLESNSEHWNALLLSLRELTEWVIRKDTELSTLGLGPVRGDAVSLQKQLDDHKAFRRQLEDKRPIVESNLTSGRQYIANEAAVSDTSDTEANHDSDSRYMSAEEQSRELTRSIRREVGKLSEQWNNLIDRSDNWKHRLDEYMTKMRQFQKILEDLSSRVALAEQTKTSWLPPSSVGEANEQMQQLQRLRDKMTTASALLDDCNEQQSFFTANQVLVPTPCLSKLEDLNTRMKLLQIAMDERQKVLCQAGAQQTHENGDDGRTTSNSGTIGPLPNLGQSVKPPWERATTAANVPYYIDHERETTHWDHPEMIELMKGLADLNEIRFSAYRTAMKLRSVQKRLALDRISMSTACESFDRHGLRAQNDKLIDIPDMTTVLHSLYVTIDKIDLTLMLDLAINWILNVYDSQRTGQIRVLSFKVGLVLLCKGHLEEKYRYLFRLVADTDRRADQRRLGLLLHDCIQVPRQLGEVAAFGGSNIEPSVRSCLEQAGISQEAIDGNQDISIELQHFLGWLQHEPQSLVWLPVLHRLAAAEAAKHQAKCNICKEYPIVGFRYRCLKCFNFDMCQKCFFFGRNAKNHKLTHPMHEYCTTTTSTEDVRDFTRALKNKFKSRKYFKKHPRVGYLPVQSVLEGDALESPAPSPQHTTHQLQNDMHSRLEMYASRLAQVEYGGTGSNSTPDSDDEHQLIAQYCQALPGTSNGSAPKSPVQVMAAMDAEQREELEAIIRDLEEENANLQAEYQQLCSKEQSGMPEDSNGMQHSSSSMTGLSGQGEQGQDMMAEAKLLRQHKGRLEARMQILEDHNRQLEAQLQRLRQLLDEPNGGGSSATSSGLPSAPGSALNSKPNTLQTRSVTASQLNTDSPAKMNQQNGHYEHNSKGIMLPGMNSEIQQQHAQLASLAAKHHQHQLSGALNALHQQQQQQLQQQPPQQQRSMMTGNGGMDISGGMQTSGGYLGDDGRPPPPPHSSLMQQQHQQHLNENSSGLVTVITEQELESINDDLEDSSSSNTTNTTTTTTTTATTEKTCVELQK</sequence>
<accession>Q9VDW6</accession>
<accession>Q0KI51</accession>
<accession>Q0KI52</accession>
<accession>Q0KI53</accession>
<accession>Q9BK96</accession>
<accession>Q9BK98</accession>
<accession>Q9BKA0</accession>
<accession>Q9GT71</accession>
<accession>Q9VDW4</accession>
<dbReference type="EMBL" id="AF277386">
    <property type="protein sequence ID" value="AAG17395.1"/>
    <property type="molecule type" value="mRNA"/>
</dbReference>
<dbReference type="EMBL" id="AF297644">
    <property type="protein sequence ID" value="AAK15256.1"/>
    <property type="molecule type" value="mRNA"/>
</dbReference>
<dbReference type="EMBL" id="AF300456">
    <property type="protein sequence ID" value="AAK15258.1"/>
    <property type="molecule type" value="mRNA"/>
</dbReference>
<dbReference type="EMBL" id="AF302236">
    <property type="protein sequence ID" value="AAK18176.1"/>
    <property type="molecule type" value="mRNA"/>
</dbReference>
<dbReference type="EMBL" id="AE014297">
    <property type="protein sequence ID" value="AAF55673.2"/>
    <property type="molecule type" value="Genomic_DNA"/>
</dbReference>
<dbReference type="EMBL" id="AE014297">
    <property type="protein sequence ID" value="AAF55675.2"/>
    <property type="molecule type" value="Genomic_DNA"/>
</dbReference>
<dbReference type="EMBL" id="AE014297">
    <property type="protein sequence ID" value="ABI31176.1"/>
    <property type="molecule type" value="Genomic_DNA"/>
</dbReference>
<dbReference type="EMBL" id="AE014297">
    <property type="protein sequence ID" value="ABI31178.1"/>
    <property type="molecule type" value="Genomic_DNA"/>
</dbReference>
<dbReference type="EMBL" id="AE014297">
    <property type="protein sequence ID" value="ABI31180.1"/>
    <property type="molecule type" value="Genomic_DNA"/>
</dbReference>
<dbReference type="RefSeq" id="NP_001036722.1">
    <molecule id="Q9VDW6-5"/>
    <property type="nucleotide sequence ID" value="NM_001043257.2"/>
</dbReference>
<dbReference type="RefSeq" id="NP_001036723.1">
    <molecule id="Q9VDW6-1"/>
    <property type="nucleotide sequence ID" value="NM_001043258.2"/>
</dbReference>
<dbReference type="RefSeq" id="NP_001036724.1">
    <property type="nucleotide sequence ID" value="NM_001043259.2"/>
</dbReference>
<dbReference type="RefSeq" id="NP_001036726.1">
    <property type="nucleotide sequence ID" value="NM_001043261.2"/>
</dbReference>
<dbReference type="RefSeq" id="NP_001036728.1">
    <property type="nucleotide sequence ID" value="NM_001043263.2"/>
</dbReference>
<dbReference type="SMR" id="Q9VDW6"/>
<dbReference type="BioGRID" id="67322">
    <property type="interactions" value="74"/>
</dbReference>
<dbReference type="ComplexPortal" id="CPX-2420">
    <property type="entry name" value="Dystrophin glycoprotein complex"/>
</dbReference>
<dbReference type="FunCoup" id="Q9VDW6">
    <property type="interactions" value="362"/>
</dbReference>
<dbReference type="IntAct" id="Q9VDW6">
    <property type="interactions" value="39"/>
</dbReference>
<dbReference type="STRING" id="7227.FBpp0110219"/>
<dbReference type="iPTMnet" id="Q9VDW6"/>
<dbReference type="PaxDb" id="7227-FBpp0110219"/>
<dbReference type="DNASU" id="42327"/>
<dbReference type="EnsemblMetazoa" id="FBtr0083764">
    <molecule id="Q9VDW6-1"/>
    <property type="protein sequence ID" value="FBpp0083178"/>
    <property type="gene ID" value="FBgn0260003"/>
</dbReference>
<dbReference type="EnsemblMetazoa" id="FBtr0110919">
    <molecule id="Q9VDW6-5"/>
    <property type="protein sequence ID" value="FBpp0110219"/>
    <property type="gene ID" value="FBgn0260003"/>
</dbReference>
<dbReference type="GeneID" id="42327"/>
<dbReference type="UCSC" id="CG34157-RH">
    <property type="organism name" value="d. melanogaster"/>
</dbReference>
<dbReference type="AGR" id="FB:FBgn0260003"/>
<dbReference type="CTD" id="42327"/>
<dbReference type="FlyBase" id="FBgn0260003">
    <property type="gene designation" value="Dys"/>
</dbReference>
<dbReference type="VEuPathDB" id="VectorBase:FBgn0260003"/>
<dbReference type="eggNOG" id="KOG4286">
    <property type="taxonomic scope" value="Eukaryota"/>
</dbReference>
<dbReference type="GeneTree" id="ENSGT00940000166230"/>
<dbReference type="InParanoid" id="Q9VDW6"/>
<dbReference type="OMA" id="SACERYT"/>
<dbReference type="OrthoDB" id="10057795at2759"/>
<dbReference type="PhylomeDB" id="Q9VDW6"/>
<dbReference type="Reactome" id="R-DME-114608">
    <property type="pathway name" value="Platelet degranulation"/>
</dbReference>
<dbReference type="Reactome" id="R-DME-446388">
    <property type="pathway name" value="Regulation of cytoskeletal remodeling and cell spreading by IPP complex components"/>
</dbReference>
<dbReference type="Reactome" id="R-DME-9013405">
    <property type="pathway name" value="RHOD GTPase cycle"/>
</dbReference>
<dbReference type="Reactome" id="R-DME-9013418">
    <property type="pathway name" value="RHOBTB2 GTPase cycle"/>
</dbReference>
<dbReference type="Reactome" id="R-DME-9035034">
    <property type="pathway name" value="RHOF GTPase cycle"/>
</dbReference>
<dbReference type="BioGRID-ORCS" id="42327">
    <property type="hits" value="0 hits in 3 CRISPR screens"/>
</dbReference>
<dbReference type="GenomeRNAi" id="42327"/>
<dbReference type="Proteomes" id="UP000000803">
    <property type="component" value="Chromosome 3R"/>
</dbReference>
<dbReference type="Bgee" id="FBgn0260003">
    <property type="expression patterns" value="Expressed in adult brain perineurial glial cell (Drosophila) in insect head and 274 other cell types or tissues"/>
</dbReference>
<dbReference type="ExpressionAtlas" id="Q9VDW6">
    <property type="expression patterns" value="baseline and differential"/>
</dbReference>
<dbReference type="GO" id="GO:0005938">
    <property type="term" value="C:cell cortex"/>
    <property type="evidence" value="ECO:0007005"/>
    <property type="project" value="FlyBase"/>
</dbReference>
<dbReference type="GO" id="GO:0030054">
    <property type="term" value="C:cell junction"/>
    <property type="evidence" value="ECO:0000318"/>
    <property type="project" value="GO_Central"/>
</dbReference>
<dbReference type="GO" id="GO:0042995">
    <property type="term" value="C:cell projection"/>
    <property type="evidence" value="ECO:0000318"/>
    <property type="project" value="GO_Central"/>
</dbReference>
<dbReference type="GO" id="GO:0030864">
    <property type="term" value="C:cortical actin cytoskeleton"/>
    <property type="evidence" value="ECO:0000318"/>
    <property type="project" value="GO_Central"/>
</dbReference>
<dbReference type="GO" id="GO:0005737">
    <property type="term" value="C:cytoplasm"/>
    <property type="evidence" value="ECO:0000314"/>
    <property type="project" value="FlyBase"/>
</dbReference>
<dbReference type="GO" id="GO:0005856">
    <property type="term" value="C:cytoskeleton"/>
    <property type="evidence" value="ECO:0000314"/>
    <property type="project" value="UniProtKB"/>
</dbReference>
<dbReference type="GO" id="GO:0016010">
    <property type="term" value="C:dystrophin-associated glycoprotein complex"/>
    <property type="evidence" value="ECO:0000353"/>
    <property type="project" value="FlyBase"/>
</dbReference>
<dbReference type="GO" id="GO:0031594">
    <property type="term" value="C:neuromuscular junction"/>
    <property type="evidence" value="ECO:0000315"/>
    <property type="project" value="FlyBase"/>
</dbReference>
<dbReference type="GO" id="GO:0005886">
    <property type="term" value="C:plasma membrane"/>
    <property type="evidence" value="ECO:0000318"/>
    <property type="project" value="GO_Central"/>
</dbReference>
<dbReference type="GO" id="GO:0042383">
    <property type="term" value="C:sarcolemma"/>
    <property type="evidence" value="ECO:0007669"/>
    <property type="project" value="UniProtKB-SubCell"/>
</dbReference>
<dbReference type="GO" id="GO:0045202">
    <property type="term" value="C:synapse"/>
    <property type="evidence" value="ECO:0000314"/>
    <property type="project" value="UniProtKB"/>
</dbReference>
<dbReference type="GO" id="GO:0030018">
    <property type="term" value="C:Z disc"/>
    <property type="evidence" value="ECO:0000318"/>
    <property type="project" value="GO_Central"/>
</dbReference>
<dbReference type="GO" id="GO:0051015">
    <property type="term" value="F:actin filament binding"/>
    <property type="evidence" value="ECO:0000318"/>
    <property type="project" value="GO_Central"/>
</dbReference>
<dbReference type="GO" id="GO:0008307">
    <property type="term" value="F:structural constituent of muscle"/>
    <property type="evidence" value="ECO:0000250"/>
    <property type="project" value="FlyBase"/>
</dbReference>
<dbReference type="GO" id="GO:0050699">
    <property type="term" value="F:WW domain binding"/>
    <property type="evidence" value="ECO:0000353"/>
    <property type="project" value="FlyBase"/>
</dbReference>
<dbReference type="GO" id="GO:0008270">
    <property type="term" value="F:zinc ion binding"/>
    <property type="evidence" value="ECO:0007669"/>
    <property type="project" value="UniProtKB-KW"/>
</dbReference>
<dbReference type="GO" id="GO:0030036">
    <property type="term" value="P:actin cytoskeleton organization"/>
    <property type="evidence" value="ECO:0000318"/>
    <property type="project" value="GO_Central"/>
</dbReference>
<dbReference type="GO" id="GO:0030010">
    <property type="term" value="P:establishment of cell polarity"/>
    <property type="evidence" value="ECO:0000315"/>
    <property type="project" value="FlyBase"/>
</dbReference>
<dbReference type="GO" id="GO:0008586">
    <property type="term" value="P:imaginal disc-derived wing vein morphogenesis"/>
    <property type="evidence" value="ECO:0000315"/>
    <property type="project" value="FlyBase"/>
</dbReference>
<dbReference type="GO" id="GO:0007474">
    <property type="term" value="P:imaginal disc-derived wing vein specification"/>
    <property type="evidence" value="ECO:0000315"/>
    <property type="project" value="UniProtKB"/>
</dbReference>
<dbReference type="GO" id="GO:0048790">
    <property type="term" value="P:maintenance of presynaptic active zone structure"/>
    <property type="evidence" value="ECO:0000315"/>
    <property type="project" value="FlyBase"/>
</dbReference>
<dbReference type="GO" id="GO:0046716">
    <property type="term" value="P:muscle cell cellular homeostasis"/>
    <property type="evidence" value="ECO:0000315"/>
    <property type="project" value="FlyBase"/>
</dbReference>
<dbReference type="GO" id="GO:0055001">
    <property type="term" value="P:muscle cell development"/>
    <property type="evidence" value="ECO:0000318"/>
    <property type="project" value="GO_Central"/>
</dbReference>
<dbReference type="GO" id="GO:0007274">
    <property type="term" value="P:neuromuscular synaptic transmission"/>
    <property type="evidence" value="ECO:0000314"/>
    <property type="project" value="FlyBase"/>
</dbReference>
<dbReference type="GO" id="GO:0046928">
    <property type="term" value="P:regulation of neurotransmitter secretion"/>
    <property type="evidence" value="ECO:0000314"/>
    <property type="project" value="FlyBase"/>
</dbReference>
<dbReference type="GO" id="GO:0048172">
    <property type="term" value="P:regulation of short-term neuronal synaptic plasticity"/>
    <property type="evidence" value="ECO:0000314"/>
    <property type="project" value="FlyBase"/>
</dbReference>
<dbReference type="CDD" id="cd21186">
    <property type="entry name" value="CH_DMD-like_rpt1"/>
    <property type="match status" value="1"/>
</dbReference>
<dbReference type="CDD" id="cd16242">
    <property type="entry name" value="EFh_DMD_like"/>
    <property type="match status" value="1"/>
</dbReference>
<dbReference type="CDD" id="cd00176">
    <property type="entry name" value="SPEC"/>
    <property type="match status" value="4"/>
</dbReference>
<dbReference type="CDD" id="cd00201">
    <property type="entry name" value="WW"/>
    <property type="match status" value="1"/>
</dbReference>
<dbReference type="CDD" id="cd02334">
    <property type="entry name" value="ZZ_dystrophin"/>
    <property type="match status" value="1"/>
</dbReference>
<dbReference type="FunFam" id="3.30.60.90:FF:000001">
    <property type="entry name" value="Dystrophin isoform 2"/>
    <property type="match status" value="1"/>
</dbReference>
<dbReference type="FunFam" id="1.20.58.60:FF:000151">
    <property type="entry name" value="dystrophin, isoforms A/C/F/G/H isoform X2"/>
    <property type="match status" value="1"/>
</dbReference>
<dbReference type="FunFam" id="1.20.58.60:FF:000150">
    <property type="entry name" value="dystrophin, isoforms A/C/F/G/H isoform X5"/>
    <property type="match status" value="1"/>
</dbReference>
<dbReference type="FunFam" id="1.20.58.60:FF:000175">
    <property type="entry name" value="dystrophin, isoforms A/C/F/G/H isoform X5"/>
    <property type="match status" value="1"/>
</dbReference>
<dbReference type="FunFam" id="1.20.58.60:FF:000075">
    <property type="entry name" value="utrophin isoform X1"/>
    <property type="match status" value="1"/>
</dbReference>
<dbReference type="Gene3D" id="1.20.58.60">
    <property type="match status" value="8"/>
</dbReference>
<dbReference type="Gene3D" id="2.20.70.10">
    <property type="match status" value="1"/>
</dbReference>
<dbReference type="Gene3D" id="3.30.60.90">
    <property type="match status" value="1"/>
</dbReference>
<dbReference type="Gene3D" id="1.10.418.10">
    <property type="entry name" value="Calponin-like domain"/>
    <property type="match status" value="2"/>
</dbReference>
<dbReference type="Gene3D" id="1.10.238.10">
    <property type="entry name" value="EF-hand"/>
    <property type="match status" value="2"/>
</dbReference>
<dbReference type="InterPro" id="IPR001589">
    <property type="entry name" value="Actinin_actin-bd_CS"/>
</dbReference>
<dbReference type="InterPro" id="IPR001715">
    <property type="entry name" value="CH_dom"/>
</dbReference>
<dbReference type="InterPro" id="IPR036872">
    <property type="entry name" value="CH_dom_sf"/>
</dbReference>
<dbReference type="InterPro" id="IPR035436">
    <property type="entry name" value="Dystrophin/utrophin"/>
</dbReference>
<dbReference type="InterPro" id="IPR011992">
    <property type="entry name" value="EF-hand-dom_pair"/>
</dbReference>
<dbReference type="InterPro" id="IPR015153">
    <property type="entry name" value="EF-hand_dom_typ1"/>
</dbReference>
<dbReference type="InterPro" id="IPR015154">
    <property type="entry name" value="EF-hand_dom_typ2"/>
</dbReference>
<dbReference type="InterPro" id="IPR050774">
    <property type="entry name" value="KCMF1/Dystrophin"/>
</dbReference>
<dbReference type="InterPro" id="IPR018159">
    <property type="entry name" value="Spectrin/alpha-actinin"/>
</dbReference>
<dbReference type="InterPro" id="IPR002017">
    <property type="entry name" value="Spectrin_repeat"/>
</dbReference>
<dbReference type="InterPro" id="IPR001202">
    <property type="entry name" value="WW_dom"/>
</dbReference>
<dbReference type="InterPro" id="IPR036020">
    <property type="entry name" value="WW_dom_sf"/>
</dbReference>
<dbReference type="InterPro" id="IPR000433">
    <property type="entry name" value="Znf_ZZ"/>
</dbReference>
<dbReference type="InterPro" id="IPR043145">
    <property type="entry name" value="Znf_ZZ_sf"/>
</dbReference>
<dbReference type="PANTHER" id="PTHR12268:SF14">
    <property type="entry name" value="DYSTROPHIN-1"/>
    <property type="match status" value="1"/>
</dbReference>
<dbReference type="PANTHER" id="PTHR12268">
    <property type="entry name" value="E3 UBIQUITIN-PROTEIN LIGASE KCMF1"/>
    <property type="match status" value="1"/>
</dbReference>
<dbReference type="Pfam" id="PF00307">
    <property type="entry name" value="CH"/>
    <property type="match status" value="2"/>
</dbReference>
<dbReference type="Pfam" id="PF09068">
    <property type="entry name" value="EF-hand_2"/>
    <property type="match status" value="1"/>
</dbReference>
<dbReference type="Pfam" id="PF09069">
    <property type="entry name" value="EF-hand_3"/>
    <property type="match status" value="1"/>
</dbReference>
<dbReference type="Pfam" id="PF00435">
    <property type="entry name" value="Spectrin"/>
    <property type="match status" value="3"/>
</dbReference>
<dbReference type="Pfam" id="PF00569">
    <property type="entry name" value="ZZ"/>
    <property type="match status" value="1"/>
</dbReference>
<dbReference type="PIRSF" id="PIRSF002341">
    <property type="entry name" value="Dystrophin/utrophin"/>
    <property type="match status" value="1"/>
</dbReference>
<dbReference type="SMART" id="SM00033">
    <property type="entry name" value="CH"/>
    <property type="match status" value="2"/>
</dbReference>
<dbReference type="SMART" id="SM00150">
    <property type="entry name" value="SPEC"/>
    <property type="match status" value="11"/>
</dbReference>
<dbReference type="SMART" id="SM00456">
    <property type="entry name" value="WW"/>
    <property type="match status" value="1"/>
</dbReference>
<dbReference type="SMART" id="SM00291">
    <property type="entry name" value="ZnF_ZZ"/>
    <property type="match status" value="1"/>
</dbReference>
<dbReference type="SUPFAM" id="SSF47576">
    <property type="entry name" value="Calponin-homology domain, CH-domain"/>
    <property type="match status" value="1"/>
</dbReference>
<dbReference type="SUPFAM" id="SSF47473">
    <property type="entry name" value="EF-hand"/>
    <property type="match status" value="2"/>
</dbReference>
<dbReference type="SUPFAM" id="SSF57850">
    <property type="entry name" value="RING/U-box"/>
    <property type="match status" value="1"/>
</dbReference>
<dbReference type="SUPFAM" id="SSF46966">
    <property type="entry name" value="Spectrin repeat"/>
    <property type="match status" value="9"/>
</dbReference>
<dbReference type="SUPFAM" id="SSF51045">
    <property type="entry name" value="WW domain"/>
    <property type="match status" value="1"/>
</dbReference>
<dbReference type="PROSITE" id="PS00019">
    <property type="entry name" value="ACTININ_1"/>
    <property type="match status" value="1"/>
</dbReference>
<dbReference type="PROSITE" id="PS00020">
    <property type="entry name" value="ACTININ_2"/>
    <property type="match status" value="1"/>
</dbReference>
<dbReference type="PROSITE" id="PS50021">
    <property type="entry name" value="CH"/>
    <property type="match status" value="2"/>
</dbReference>
<dbReference type="PROSITE" id="PS50020">
    <property type="entry name" value="WW_DOMAIN_2"/>
    <property type="match status" value="1"/>
</dbReference>
<dbReference type="PROSITE" id="PS01357">
    <property type="entry name" value="ZF_ZZ_1"/>
    <property type="match status" value="1"/>
</dbReference>
<dbReference type="PROSITE" id="PS50135">
    <property type="entry name" value="ZF_ZZ_2"/>
    <property type="match status" value="1"/>
</dbReference>
<name>DMDA_DROME</name>
<comment type="function">
    <text evidence="8 10 11">Required for the maintenance of appropriate synaptic retrograde communication and the stabilization of muscle cell architecture or physiology. Both det and Dg are required for maintenance of early dpp signaling in the presumptive crossvein. Isoform A is not required to maintain muscle integrity, but plays a role in neuromuscular homeostasis by regulating neurotransmitter release. May play a role in anchoring the cytoskeleton to the plasma membrane.</text>
</comment>
<comment type="subunit">
    <text evidence="6 9">Component of the dystrophin associated protein complex (DAPC). Interacts with Dg, via the Dg WW domain binding sites.</text>
</comment>
<comment type="subcellular location">
    <subcellularLocation>
        <location evidence="8">Cell membrane</location>
        <location evidence="8">Sarcolemma</location>
        <topology evidence="8">Peripheral membrane protein</topology>
        <orientation evidence="8">Cytoplasmic side</orientation>
    </subcellularLocation>
    <subcellularLocation>
        <location evidence="8">Cytoplasm</location>
        <location evidence="8">Cytoskeleton</location>
    </subcellularLocation>
    <text>Isoform A is localized to both the postsynaptic region of the NMJ and to the extrasynaptic regions, where it colocalizes with actin.</text>
</comment>
<comment type="alternative products">
    <event type="alternative splicing"/>
    <isoform>
        <id>Q9VDW6-5</id>
        <name>H</name>
        <sequence type="displayed"/>
    </isoform>
    <isoform>
        <id>Q9VDW6-1</id>
        <name evidence="7">A</name>
        <name evidence="7">DLP2</name>
        <sequence type="described" ref="VSP_036500"/>
    </isoform>
    <isoform>
        <id>Q9VDW6-2</id>
        <name evidence="13">C</name>
        <sequence type="described" ref="VSP_050731 VSP_050732"/>
    </isoform>
    <isoform>
        <id>Q9VDW6-3</id>
        <name>F</name>
        <name evidence="7">DLP1</name>
        <sequence type="described" ref="VSP_050729"/>
    </isoform>
    <isoform>
        <id>Q9VDW6-4</id>
        <name>G</name>
        <name evidence="7">DLP3</name>
        <sequence type="described" ref="VSP_050730"/>
    </isoform>
    <isoform>
        <id>Q9VDW3-1</id>
        <name evidence="13">B</name>
        <name>Dp186</name>
        <sequence type="external"/>
    </isoform>
    <isoform>
        <id>Q0KI50-1</id>
        <name>D</name>
        <name>Dp205</name>
        <sequence type="external"/>
    </isoform>
    <isoform>
        <id>Q7YU29-1</id>
        <name>E</name>
        <name>Dp117</name>
        <sequence type="external"/>
    </isoform>
</comment>
<comment type="tissue specificity">
    <text evidence="7 8">Isoform A, isoform F and isoform G are expressed in the midgut endoderm of stage 12 embryos. In stage 16 embryos, expression is also seen in the pericardial cells, cells at the ectoderm segmental border and cells along the midline of the CNS. During embryogenesis, isoform A is also expressed in the visceral mesoderm, muscle attachment sites, mesectodermal cells at the midline, the gut, and throughout muscle fibers. In larvae, isoform A is found in all muscle fibers, but not detectable in the brain or neuropil.</text>
</comment>
<comment type="developmental stage">
    <text evidence="7 8">Isoform A is expressed in embryos and larvae and levels increase further in adults. Isoform F has weak expression in embryos, increases in larvae and falls again in adults. Isoform G is weakly expressed in adult flies, and not detectable earlier in development.</text>
</comment>
<comment type="disruption phenotype">
    <text evidence="10 11">Wings exhibit a 'crossveinless' phenotype. Adult flies are viable and the crossvein defect is the sole overt morphological defect observed. Flies that have reduced expression of all isoforms (due to transgenic RNA interference targeting the common C-terminal region) exhibit severe muscle degeneration in larvae and adult flies. Muscles were either ruptured, absent or the fibers were detached from their attachment sites at tendon cells. These are necrotic, not apoptotic processes.</text>
</comment>
<proteinExistence type="evidence at protein level"/>
<organism evidence="17">
    <name type="scientific">Drosophila melanogaster</name>
    <name type="common">Fruit fly</name>
    <dbReference type="NCBI Taxonomy" id="7227"/>
    <lineage>
        <taxon>Eukaryota</taxon>
        <taxon>Metazoa</taxon>
        <taxon>Ecdysozoa</taxon>
        <taxon>Arthropoda</taxon>
        <taxon>Hexapoda</taxon>
        <taxon>Insecta</taxon>
        <taxon>Pterygota</taxon>
        <taxon>Neoptera</taxon>
        <taxon>Endopterygota</taxon>
        <taxon>Diptera</taxon>
        <taxon>Brachycera</taxon>
        <taxon>Muscomorpha</taxon>
        <taxon>Ephydroidea</taxon>
        <taxon>Drosophilidae</taxon>
        <taxon>Drosophila</taxon>
        <taxon>Sophophora</taxon>
    </lineage>
</organism>